<evidence type="ECO:0000250" key="1">
    <source>
        <dbReference type="UniProtKB" id="P9WKC9"/>
    </source>
</evidence>
<evidence type="ECO:0000255" key="2"/>
<evidence type="ECO:0000305" key="3"/>
<protein>
    <recommendedName>
        <fullName>Putative diacyglycerol O-acyltransferase MT3848</fullName>
        <ecNumber evidence="1">2.3.1.20</ecNumber>
    </recommendedName>
    <alternativeName>
        <fullName>Putative triacylglycerol synthase MT3848</fullName>
    </alternativeName>
</protein>
<reference key="1">
    <citation type="journal article" date="2002" name="J. Bacteriol.">
        <title>Whole-genome comparison of Mycobacterium tuberculosis clinical and laboratory strains.</title>
        <authorList>
            <person name="Fleischmann R.D."/>
            <person name="Alland D."/>
            <person name="Eisen J.A."/>
            <person name="Carpenter L."/>
            <person name="White O."/>
            <person name="Peterson J.D."/>
            <person name="DeBoy R.T."/>
            <person name="Dodson R.J."/>
            <person name="Gwinn M.L."/>
            <person name="Haft D.H."/>
            <person name="Hickey E.K."/>
            <person name="Kolonay J.F."/>
            <person name="Nelson W.C."/>
            <person name="Umayam L.A."/>
            <person name="Ermolaeva M.D."/>
            <person name="Salzberg S.L."/>
            <person name="Delcher A."/>
            <person name="Utterback T.R."/>
            <person name="Weidman J.F."/>
            <person name="Khouri H.M."/>
            <person name="Gill J."/>
            <person name="Mikula A."/>
            <person name="Bishai W."/>
            <person name="Jacobs W.R. Jr."/>
            <person name="Venter J.C."/>
            <person name="Fraser C.M."/>
        </authorList>
    </citation>
    <scope>NUCLEOTIDE SEQUENCE [LARGE SCALE GENOMIC DNA]</scope>
    <source>
        <strain>CDC 1551 / Oshkosh</strain>
    </source>
</reference>
<organism>
    <name type="scientific">Mycobacterium tuberculosis (strain CDC 1551 / Oshkosh)</name>
    <dbReference type="NCBI Taxonomy" id="83331"/>
    <lineage>
        <taxon>Bacteria</taxon>
        <taxon>Bacillati</taxon>
        <taxon>Actinomycetota</taxon>
        <taxon>Actinomycetes</taxon>
        <taxon>Mycobacteriales</taxon>
        <taxon>Mycobacteriaceae</taxon>
        <taxon>Mycobacterium</taxon>
        <taxon>Mycobacterium tuberculosis complex</taxon>
    </lineage>
</organism>
<comment type="catalytic activity">
    <reaction evidence="1">
        <text>an acyl-CoA + a 1,2-diacyl-sn-glycerol = a triacyl-sn-glycerol + CoA</text>
        <dbReference type="Rhea" id="RHEA:10868"/>
        <dbReference type="ChEBI" id="CHEBI:17815"/>
        <dbReference type="ChEBI" id="CHEBI:57287"/>
        <dbReference type="ChEBI" id="CHEBI:58342"/>
        <dbReference type="ChEBI" id="CHEBI:64615"/>
        <dbReference type="EC" id="2.3.1.20"/>
    </reaction>
</comment>
<comment type="pathway">
    <text>Glycerolipid metabolism; triacylglycerol biosynthesis.</text>
</comment>
<comment type="similarity">
    <text evidence="3">Belongs to the long-chain O-acyltransferase family.</text>
</comment>
<sequence length="448" mass="48353">MSPIDALFLSAESREHPLHVGALQLFEPPAGAGRGFVRETYQAMLQCREIAPLFRKRPTSLHGALINLGWSTDADVDLGYHARRSALPAPGRVRELLELTSRLHSNLLDRHRPLWETHVIEGLRDGRFAIYSKMHHALVDGVSGLTLMRQPMTTDPIEGKLRTAWSPATQHTAIKRRRGRLQQLGGMLGSVAGLAPSTLRLARSALIEQQLTLPFGAPHTMLNVAVGGARRCAAQSWPLDRVKAVKDAAGVSLNDVVLAMCAGALREYLDDNDALPDTPLVAMVPVSLRTDRDSVGGNMVGAVLCNLATHLDDPADRLNAIHASMRGNKNVLSQLPRAQALAVSLLLLSPAALNTLPGLAKATPPPFNVCISNVPGAREPLYFNGARMVGNYPMSLVLDGQALNITLTSTADSLDFGVVGCRRSVPHVQRVLSHLETSLKELERAVGL</sequence>
<gene>
    <name type="ordered locus">MT3848</name>
</gene>
<dbReference type="EC" id="2.3.1.20" evidence="1"/>
<dbReference type="EMBL" id="AE000516">
    <property type="protein sequence ID" value="AAK48212.1"/>
    <property type="molecule type" value="Genomic_DNA"/>
</dbReference>
<dbReference type="PIR" id="E70798">
    <property type="entry name" value="E70798"/>
</dbReference>
<dbReference type="RefSeq" id="WP_003900746.1">
    <property type="nucleotide sequence ID" value="NZ_KK341227.1"/>
</dbReference>
<dbReference type="SMR" id="P9WKA4"/>
<dbReference type="KEGG" id="mtc:MT3848"/>
<dbReference type="PATRIC" id="fig|83331.31.peg.4141"/>
<dbReference type="HOGENOM" id="CLU_024186_4_1_11"/>
<dbReference type="UniPathway" id="UPA00282"/>
<dbReference type="Proteomes" id="UP000001020">
    <property type="component" value="Chromosome"/>
</dbReference>
<dbReference type="GO" id="GO:0005886">
    <property type="term" value="C:plasma membrane"/>
    <property type="evidence" value="ECO:0007669"/>
    <property type="project" value="TreeGrafter"/>
</dbReference>
<dbReference type="GO" id="GO:0004144">
    <property type="term" value="F:diacylglycerol O-acyltransferase activity"/>
    <property type="evidence" value="ECO:0007669"/>
    <property type="project" value="UniProtKB-EC"/>
</dbReference>
<dbReference type="GO" id="GO:0051701">
    <property type="term" value="P:biological process involved in interaction with host"/>
    <property type="evidence" value="ECO:0007669"/>
    <property type="project" value="TreeGrafter"/>
</dbReference>
<dbReference type="GO" id="GO:0006071">
    <property type="term" value="P:glycerol metabolic process"/>
    <property type="evidence" value="ECO:0007669"/>
    <property type="project" value="UniProtKB-KW"/>
</dbReference>
<dbReference type="GO" id="GO:0001666">
    <property type="term" value="P:response to hypoxia"/>
    <property type="evidence" value="ECO:0007669"/>
    <property type="project" value="TreeGrafter"/>
</dbReference>
<dbReference type="GO" id="GO:0071731">
    <property type="term" value="P:response to nitric oxide"/>
    <property type="evidence" value="ECO:0007669"/>
    <property type="project" value="TreeGrafter"/>
</dbReference>
<dbReference type="GO" id="GO:0019432">
    <property type="term" value="P:triglyceride biosynthetic process"/>
    <property type="evidence" value="ECO:0007669"/>
    <property type="project" value="UniProtKB-UniPathway"/>
</dbReference>
<dbReference type="InterPro" id="IPR014292">
    <property type="entry name" value="Acyl_transf_WS/DGAT"/>
</dbReference>
<dbReference type="InterPro" id="IPR045034">
    <property type="entry name" value="O-acyltransferase_WSD1-like"/>
</dbReference>
<dbReference type="InterPro" id="IPR009721">
    <property type="entry name" value="O-acyltransferase_WSD1_C"/>
</dbReference>
<dbReference type="InterPro" id="IPR004255">
    <property type="entry name" value="O-acyltransferase_WSD1_N"/>
</dbReference>
<dbReference type="NCBIfam" id="TIGR02946">
    <property type="entry name" value="acyl_WS_DGAT"/>
    <property type="match status" value="1"/>
</dbReference>
<dbReference type="PANTHER" id="PTHR31650">
    <property type="entry name" value="O-ACYLTRANSFERASE (WSD1-LIKE) FAMILY PROTEIN"/>
    <property type="match status" value="1"/>
</dbReference>
<dbReference type="PANTHER" id="PTHR31650:SF1">
    <property type="entry name" value="WAX ESTER SYNTHASE_DIACYLGLYCEROL ACYLTRANSFERASE 4-RELATED"/>
    <property type="match status" value="1"/>
</dbReference>
<dbReference type="Pfam" id="PF06974">
    <property type="entry name" value="WS_DGAT_C"/>
    <property type="match status" value="1"/>
</dbReference>
<dbReference type="Pfam" id="PF03007">
    <property type="entry name" value="WS_DGAT_cat"/>
    <property type="match status" value="1"/>
</dbReference>
<dbReference type="SUPFAM" id="SSF52777">
    <property type="entry name" value="CoA-dependent acyltransferases"/>
    <property type="match status" value="2"/>
</dbReference>
<feature type="chain" id="PRO_0000427688" description="Putative diacyglycerol O-acyltransferase MT3848">
    <location>
        <begin position="1"/>
        <end position="448"/>
    </location>
</feature>
<feature type="active site" description="Proton acceptor" evidence="2">
    <location>
        <position position="136"/>
    </location>
</feature>
<proteinExistence type="inferred from homology"/>
<keyword id="KW-0012">Acyltransferase</keyword>
<keyword id="KW-0319">Glycerol metabolism</keyword>
<keyword id="KW-0444">Lipid biosynthesis</keyword>
<keyword id="KW-0443">Lipid metabolism</keyword>
<keyword id="KW-1185">Reference proteome</keyword>
<keyword id="KW-0808">Transferase</keyword>
<name>Y3740_MYCTO</name>
<accession>P9WKA4</accession>
<accession>L0TF41</accession>
<accession>O69707</accession>